<gene>
    <name evidence="3" type="primary">aar</name>
    <name evidence="3 6" type="synonym">metC</name>
    <name evidence="6" type="ordered locus">WD_0925</name>
</gene>
<reference key="1">
    <citation type="journal article" date="2004" name="PLoS Biol.">
        <title>Phylogenomics of the reproductive parasite Wolbachia pipientis wMel: a streamlined genome overrun by mobile genetic elements.</title>
        <authorList>
            <person name="Wu M."/>
            <person name="Sun L.V."/>
            <person name="Vamathevan J.J."/>
            <person name="Riegler M."/>
            <person name="DeBoy R.T."/>
            <person name="Brownlie J.C."/>
            <person name="McGraw E.A."/>
            <person name="Martin W."/>
            <person name="Esser C."/>
            <person name="Ahmadinejad N."/>
            <person name="Wiegand C."/>
            <person name="Madupu R."/>
            <person name="Beanan M.J."/>
            <person name="Brinkac L.M."/>
            <person name="Daugherty S.C."/>
            <person name="Durkin A.S."/>
            <person name="Kolonay J.F."/>
            <person name="Nelson W.C."/>
            <person name="Mohamoud Y."/>
            <person name="Lee P."/>
            <person name="Berry K.J."/>
            <person name="Young M.B."/>
            <person name="Utterback T.R."/>
            <person name="Weidman J.F."/>
            <person name="Nierman W.C."/>
            <person name="Paulsen I.T."/>
            <person name="Nelson K.E."/>
            <person name="Tettelin H."/>
            <person name="O'Neill S.L."/>
            <person name="Eisen J.A."/>
        </authorList>
    </citation>
    <scope>NUCLEOTIDE SEQUENCE [LARGE SCALE GENOMIC DNA]</scope>
</reference>
<reference key="2">
    <citation type="journal article" date="2017" name="Mol. Microbiol.">
        <title>Primordial-like enzymes from bacteria with reduced genomes.</title>
        <authorList>
            <person name="Ferla M.P."/>
            <person name="Brewster J.L."/>
            <person name="Hall K.R."/>
            <person name="Evans G.B."/>
            <person name="Patrick W.M."/>
        </authorList>
    </citation>
    <scope>FUNCTION</scope>
    <scope>CATALYTIC ACTIVITY</scope>
    <scope>BIOPHYSICOCHEMICAL PROPERTIES</scope>
    <scope>SUBSTRATE SPECIFICITY</scope>
    <scope>PATHWAY</scope>
</reference>
<dbReference type="EC" id="5.1.1.1" evidence="2"/>
<dbReference type="EC" id="5.1.1.3" evidence="2"/>
<dbReference type="EMBL" id="AE017196">
    <property type="protein sequence ID" value="AAS14597.1"/>
    <property type="molecule type" value="Genomic_DNA"/>
</dbReference>
<dbReference type="SMR" id="Q73GL9"/>
<dbReference type="EnsemblBacteria" id="AAS14597">
    <property type="protein sequence ID" value="AAS14597"/>
    <property type="gene ID" value="WD_0925"/>
</dbReference>
<dbReference type="KEGG" id="wol:WD_0925"/>
<dbReference type="eggNOG" id="COG0626">
    <property type="taxonomic scope" value="Bacteria"/>
</dbReference>
<dbReference type="BRENDA" id="4.4.1.13">
    <property type="organism ID" value="17708"/>
</dbReference>
<dbReference type="BRENDA" id="5.1.1.1">
    <property type="organism ID" value="17708"/>
</dbReference>
<dbReference type="BRENDA" id="5.1.1.3">
    <property type="organism ID" value="17708"/>
</dbReference>
<dbReference type="SABIO-RK" id="Q73GL9"/>
<dbReference type="UniPathway" id="UPA00219"/>
<dbReference type="Proteomes" id="UP000008215">
    <property type="component" value="Chromosome"/>
</dbReference>
<dbReference type="GO" id="GO:0008784">
    <property type="term" value="F:alanine racemase activity"/>
    <property type="evidence" value="ECO:0007669"/>
    <property type="project" value="UniProtKB-EC"/>
</dbReference>
<dbReference type="GO" id="GO:0047804">
    <property type="term" value="F:cysteine-S-conjugate beta-lyase activity"/>
    <property type="evidence" value="ECO:0007669"/>
    <property type="project" value="InterPro"/>
</dbReference>
<dbReference type="GO" id="GO:0008881">
    <property type="term" value="F:glutamate racemase activity"/>
    <property type="evidence" value="ECO:0007669"/>
    <property type="project" value="UniProtKB-EC"/>
</dbReference>
<dbReference type="GO" id="GO:0030170">
    <property type="term" value="F:pyridoxal phosphate binding"/>
    <property type="evidence" value="ECO:0007669"/>
    <property type="project" value="InterPro"/>
</dbReference>
<dbReference type="GO" id="GO:0019450">
    <property type="term" value="P:L-cysteine catabolic process to pyruvate"/>
    <property type="evidence" value="ECO:0007669"/>
    <property type="project" value="TreeGrafter"/>
</dbReference>
<dbReference type="GO" id="GO:0009252">
    <property type="term" value="P:peptidoglycan biosynthetic process"/>
    <property type="evidence" value="ECO:0007669"/>
    <property type="project" value="UniProtKB-UniPathway"/>
</dbReference>
<dbReference type="GO" id="GO:0008360">
    <property type="term" value="P:regulation of cell shape"/>
    <property type="evidence" value="ECO:0007669"/>
    <property type="project" value="UniProtKB-KW"/>
</dbReference>
<dbReference type="GO" id="GO:0019346">
    <property type="term" value="P:transsulfuration"/>
    <property type="evidence" value="ECO:0007669"/>
    <property type="project" value="InterPro"/>
</dbReference>
<dbReference type="FunFam" id="3.40.640.10:FF:000046">
    <property type="entry name" value="Cystathionine gamma-lyase"/>
    <property type="match status" value="1"/>
</dbReference>
<dbReference type="Gene3D" id="3.90.1150.10">
    <property type="entry name" value="Aspartate Aminotransferase, domain 1"/>
    <property type="match status" value="1"/>
</dbReference>
<dbReference type="Gene3D" id="3.40.640.10">
    <property type="entry name" value="Type I PLP-dependent aspartate aminotransferase-like (Major domain)"/>
    <property type="match status" value="1"/>
</dbReference>
<dbReference type="InterPro" id="IPR000277">
    <property type="entry name" value="Cys/Met-Metab_PyrdxlP-dep_enz"/>
</dbReference>
<dbReference type="InterPro" id="IPR006233">
    <property type="entry name" value="Cys_b_lyase_bac"/>
</dbReference>
<dbReference type="InterPro" id="IPR015424">
    <property type="entry name" value="PyrdxlP-dep_Trfase"/>
</dbReference>
<dbReference type="InterPro" id="IPR015421">
    <property type="entry name" value="PyrdxlP-dep_Trfase_major"/>
</dbReference>
<dbReference type="InterPro" id="IPR015422">
    <property type="entry name" value="PyrdxlP-dep_Trfase_small"/>
</dbReference>
<dbReference type="NCBIfam" id="TIGR01324">
    <property type="entry name" value="cysta_beta_ly_B"/>
    <property type="match status" value="1"/>
</dbReference>
<dbReference type="PANTHER" id="PTHR43500">
    <property type="entry name" value="CYSTATHIONINE BETA-LYASE-RELATED"/>
    <property type="match status" value="1"/>
</dbReference>
<dbReference type="PANTHER" id="PTHR43500:SF1">
    <property type="entry name" value="CYSTATHIONINE BETA-LYASE-RELATED"/>
    <property type="match status" value="1"/>
</dbReference>
<dbReference type="Pfam" id="PF01053">
    <property type="entry name" value="Cys_Met_Meta_PP"/>
    <property type="match status" value="1"/>
</dbReference>
<dbReference type="PIRSF" id="PIRSF001434">
    <property type="entry name" value="CGS"/>
    <property type="match status" value="1"/>
</dbReference>
<dbReference type="SUPFAM" id="SSF53383">
    <property type="entry name" value="PLP-dependent transferases"/>
    <property type="match status" value="1"/>
</dbReference>
<organism>
    <name type="scientific">Wolbachia pipientis wMel</name>
    <dbReference type="NCBI Taxonomy" id="163164"/>
    <lineage>
        <taxon>Bacteria</taxon>
        <taxon>Pseudomonadati</taxon>
        <taxon>Pseudomonadota</taxon>
        <taxon>Alphaproteobacteria</taxon>
        <taxon>Rickettsiales</taxon>
        <taxon>Anaplasmataceae</taxon>
        <taxon>Wolbachieae</taxon>
        <taxon>Wolbachia</taxon>
    </lineage>
</organism>
<name>ALGLR_WOLPM</name>
<sequence>MKEESILVKAGRKFNDYKGSMNPPVYHSSTILFPTYKDYLNAANGESIYDVINDGVARDYSYSNVGTPTVHYLSNALAEIEGSGQALIYPSGLFALTFAILTFAKAGSHVLIQDNSYYRLRRFAENELPKRGTEVTFYDPTQDITDLIQSNTSLIMIETPGSVTFEISNIEHIVKVAKEHKIVTVCDNSWATPLLFKPLDYGVDVALYAVTKYLAGHSDLVMGAIIAEGEIFKLLYESYKNYGVTIQSHDCYLAHRGLRTLYTRMKRHQNTAMEVAKWLEKHSKIKKVLYPALPFHPQHELWKSYFKGASGTFSIALDREYSCEELSCMVDHMKIFGIGASWGGCDSLILPIDRRSMSRSVMNSDYGGSFIRIFCGLEDPEDLISDLNAALARLPCLNTKTGR</sequence>
<comment type="function">
    <text evidence="2">Catalyzes the racemization of L-alanine to D-alanine, and of L-glutamate to D-glutamate. The activity is low, but likely physiological since W.pipientis wMel lacks canonical alr and murI genes, while D-alanine and D-glutamate are essential components of peptidoglycan. Also displays a vestigial cystathionine beta-lyase (CBL) activity, cleaving cystathionine to homocysteine and pyruvate; however, this reaction seems not to be physiologically relevant since the only met gene in the genome of this obligately intracellular parasitic bacterium is metC, demonstrating that it is a methionine auxotroph.</text>
</comment>
<comment type="catalytic activity">
    <reaction evidence="2">
        <text>L-alanine = D-alanine</text>
        <dbReference type="Rhea" id="RHEA:20249"/>
        <dbReference type="ChEBI" id="CHEBI:57416"/>
        <dbReference type="ChEBI" id="CHEBI:57972"/>
        <dbReference type="EC" id="5.1.1.1"/>
    </reaction>
    <physiologicalReaction direction="left-to-right" evidence="5">
        <dbReference type="Rhea" id="RHEA:20250"/>
    </physiologicalReaction>
</comment>
<comment type="catalytic activity">
    <reaction evidence="2">
        <text>L-glutamate = D-glutamate</text>
        <dbReference type="Rhea" id="RHEA:12813"/>
        <dbReference type="ChEBI" id="CHEBI:29985"/>
        <dbReference type="ChEBI" id="CHEBI:29986"/>
        <dbReference type="EC" id="5.1.1.3"/>
    </reaction>
    <physiologicalReaction direction="left-to-right" evidence="5">
        <dbReference type="Rhea" id="RHEA:12814"/>
    </physiologicalReaction>
</comment>
<comment type="catalytic activity">
    <reaction evidence="2">
        <text>L,L-cystathionine + H2O = L-homocysteine + pyruvate + NH4(+)</text>
        <dbReference type="Rhea" id="RHEA:13965"/>
        <dbReference type="ChEBI" id="CHEBI:15361"/>
        <dbReference type="ChEBI" id="CHEBI:15377"/>
        <dbReference type="ChEBI" id="CHEBI:28938"/>
        <dbReference type="ChEBI" id="CHEBI:58161"/>
        <dbReference type="ChEBI" id="CHEBI:58199"/>
    </reaction>
</comment>
<comment type="cofactor">
    <cofactor evidence="1">
        <name>pyridoxal 5'-phosphate</name>
        <dbReference type="ChEBI" id="CHEBI:597326"/>
    </cofactor>
</comment>
<comment type="biophysicochemical properties">
    <kinetics>
        <KM evidence="2">0.02 mM for cystathionine (at pH 8.8 and 37 degrees Celsius)</KM>
        <KM evidence="2">3.8 mM for L-alanine (at pH 8.8 and 37 degrees Celsius)</KM>
        <KM evidence="2">0.8 mM for L-glutamate (at pH 8.0 and 37 degrees Celsius)</KM>
        <text evidence="2">kcat is 0.001 sec(-1) for cystathionine beta-lyase activity (at pH 8.8 and 37 degrees Celsius). kcat is 2.3 sec(-1) for alanine racemase activity (at pH 8.8 and 37 degrees Celsius). kcat is 0.017 sec(-1) for glutamate racemase activity (at pH 8.0 and 37 degrees Celsius).</text>
    </kinetics>
</comment>
<comment type="pathway">
    <text evidence="5">Cell wall biogenesis; peptidoglycan biosynthesis.</text>
</comment>
<comment type="subunit">
    <text evidence="1">Homotetramer; dimer of active dimers.</text>
</comment>
<comment type="similarity">
    <text evidence="4">Belongs to the trans-sulfuration enzymes family.</text>
</comment>
<protein>
    <recommendedName>
        <fullName evidence="5">L-alanine/L-glutamate racemase</fullName>
        <ecNumber evidence="2">5.1.1.1</ecNumber>
        <ecNumber evidence="2">5.1.1.3</ecNumber>
    </recommendedName>
</protein>
<keyword id="KW-0133">Cell shape</keyword>
<keyword id="KW-0413">Isomerase</keyword>
<keyword id="KW-0456">Lyase</keyword>
<keyword id="KW-0573">Peptidoglycan synthesis</keyword>
<keyword id="KW-0663">Pyridoxal phosphate</keyword>
<proteinExistence type="evidence at protein level"/>
<accession>Q73GL9</accession>
<feature type="chain" id="PRO_0000448375" description="L-alanine/L-glutamate racemase">
    <location>
        <begin position="1"/>
        <end position="403"/>
    </location>
</feature>
<feature type="binding site" evidence="1">
    <location>
        <begin position="62"/>
        <end position="64"/>
    </location>
    <ligand>
        <name>pyridoxal 5'-phosphate</name>
        <dbReference type="ChEBI" id="CHEBI:597326"/>
        <note>ligand shared between dimeric partners</note>
    </ligand>
</feature>
<feature type="binding site" description="in other chain" evidence="1">
    <location>
        <begin position="92"/>
        <end position="93"/>
    </location>
    <ligand>
        <name>pyridoxal 5'-phosphate</name>
        <dbReference type="ChEBI" id="CHEBI:597326"/>
        <note>ligand shared between dimeric partners</note>
    </ligand>
</feature>
<feature type="binding site" description="in other chain" evidence="1">
    <location>
        <begin position="209"/>
        <end position="211"/>
    </location>
    <ligand>
        <name>pyridoxal 5'-phosphate</name>
        <dbReference type="ChEBI" id="CHEBI:597326"/>
        <note>ligand shared between dimeric partners</note>
    </ligand>
</feature>
<feature type="modified residue" description="N6-(pyridoxal phosphate)lysine" evidence="1">
    <location>
        <position position="212"/>
    </location>
</feature>
<evidence type="ECO:0000250" key="1">
    <source>
        <dbReference type="UniProtKB" id="P13254"/>
    </source>
</evidence>
<evidence type="ECO:0000269" key="2">
    <source>
    </source>
</evidence>
<evidence type="ECO:0000303" key="3">
    <source>
    </source>
</evidence>
<evidence type="ECO:0000305" key="4"/>
<evidence type="ECO:0000305" key="5">
    <source>
    </source>
</evidence>
<evidence type="ECO:0000312" key="6">
    <source>
        <dbReference type="EMBL" id="AAS14597.1"/>
    </source>
</evidence>